<name>ISPH1_BRADU</name>
<accession>Q89UU5</accession>
<evidence type="ECO:0000255" key="1">
    <source>
        <dbReference type="HAMAP-Rule" id="MF_00191"/>
    </source>
</evidence>
<keyword id="KW-0004">4Fe-4S</keyword>
<keyword id="KW-0408">Iron</keyword>
<keyword id="KW-0411">Iron-sulfur</keyword>
<keyword id="KW-0414">Isoprene biosynthesis</keyword>
<keyword id="KW-0479">Metal-binding</keyword>
<keyword id="KW-0560">Oxidoreductase</keyword>
<keyword id="KW-1185">Reference proteome</keyword>
<organism>
    <name type="scientific">Bradyrhizobium diazoefficiens (strain JCM 10833 / BCRC 13528 / IAM 13628 / NBRC 14792 / USDA 110)</name>
    <dbReference type="NCBI Taxonomy" id="224911"/>
    <lineage>
        <taxon>Bacteria</taxon>
        <taxon>Pseudomonadati</taxon>
        <taxon>Pseudomonadota</taxon>
        <taxon>Alphaproteobacteria</taxon>
        <taxon>Hyphomicrobiales</taxon>
        <taxon>Nitrobacteraceae</taxon>
        <taxon>Bradyrhizobium</taxon>
    </lineage>
</organism>
<dbReference type="EC" id="1.17.7.4" evidence="1"/>
<dbReference type="EMBL" id="BA000040">
    <property type="protein sequence ID" value="BAC46579.1"/>
    <property type="molecule type" value="Genomic_DNA"/>
</dbReference>
<dbReference type="RefSeq" id="NP_767954.1">
    <property type="nucleotide sequence ID" value="NC_004463.1"/>
</dbReference>
<dbReference type="RefSeq" id="WP_011084132.1">
    <property type="nucleotide sequence ID" value="NC_004463.1"/>
</dbReference>
<dbReference type="SMR" id="Q89UU5"/>
<dbReference type="STRING" id="224911.AAV28_03460"/>
<dbReference type="EnsemblBacteria" id="BAC46579">
    <property type="protein sequence ID" value="BAC46579"/>
    <property type="gene ID" value="BAC46579"/>
</dbReference>
<dbReference type="GeneID" id="46488582"/>
<dbReference type="KEGG" id="bja:blr1314"/>
<dbReference type="PATRIC" id="fig|224911.44.peg.729"/>
<dbReference type="eggNOG" id="COG0761">
    <property type="taxonomic scope" value="Bacteria"/>
</dbReference>
<dbReference type="HOGENOM" id="CLU_027486_1_0_5"/>
<dbReference type="InParanoid" id="Q89UU5"/>
<dbReference type="OrthoDB" id="9804068at2"/>
<dbReference type="PhylomeDB" id="Q89UU5"/>
<dbReference type="UniPathway" id="UPA00056">
    <property type="reaction ID" value="UER00097"/>
</dbReference>
<dbReference type="UniPathway" id="UPA00059">
    <property type="reaction ID" value="UER00105"/>
</dbReference>
<dbReference type="Proteomes" id="UP000002526">
    <property type="component" value="Chromosome"/>
</dbReference>
<dbReference type="GO" id="GO:0005829">
    <property type="term" value="C:cytosol"/>
    <property type="evidence" value="ECO:0000318"/>
    <property type="project" value="GO_Central"/>
</dbReference>
<dbReference type="GO" id="GO:0051539">
    <property type="term" value="F:4 iron, 4 sulfur cluster binding"/>
    <property type="evidence" value="ECO:0007669"/>
    <property type="project" value="UniProtKB-UniRule"/>
</dbReference>
<dbReference type="GO" id="GO:0051745">
    <property type="term" value="F:4-hydroxy-3-methylbut-2-enyl diphosphate reductase activity"/>
    <property type="evidence" value="ECO:0000318"/>
    <property type="project" value="GO_Central"/>
</dbReference>
<dbReference type="GO" id="GO:0046872">
    <property type="term" value="F:metal ion binding"/>
    <property type="evidence" value="ECO:0007669"/>
    <property type="project" value="UniProtKB-KW"/>
</dbReference>
<dbReference type="GO" id="GO:0050992">
    <property type="term" value="P:dimethylallyl diphosphate biosynthetic process"/>
    <property type="evidence" value="ECO:0007669"/>
    <property type="project" value="UniProtKB-UniRule"/>
</dbReference>
<dbReference type="GO" id="GO:0019288">
    <property type="term" value="P:isopentenyl diphosphate biosynthetic process, methylerythritol 4-phosphate pathway"/>
    <property type="evidence" value="ECO:0000318"/>
    <property type="project" value="GO_Central"/>
</dbReference>
<dbReference type="GO" id="GO:0016114">
    <property type="term" value="P:terpenoid biosynthetic process"/>
    <property type="evidence" value="ECO:0007669"/>
    <property type="project" value="UniProtKB-UniRule"/>
</dbReference>
<dbReference type="CDD" id="cd13944">
    <property type="entry name" value="lytB_ispH"/>
    <property type="match status" value="1"/>
</dbReference>
<dbReference type="Gene3D" id="3.40.50.11270">
    <property type="match status" value="1"/>
</dbReference>
<dbReference type="Gene3D" id="3.40.1010.20">
    <property type="entry name" value="4-hydroxy-3-methylbut-2-enyl diphosphate reductase, catalytic domain"/>
    <property type="match status" value="2"/>
</dbReference>
<dbReference type="HAMAP" id="MF_00191">
    <property type="entry name" value="IspH"/>
    <property type="match status" value="1"/>
</dbReference>
<dbReference type="InterPro" id="IPR003451">
    <property type="entry name" value="LytB/IspH"/>
</dbReference>
<dbReference type="NCBIfam" id="TIGR00216">
    <property type="entry name" value="ispH_lytB"/>
    <property type="match status" value="1"/>
</dbReference>
<dbReference type="NCBIfam" id="NF002190">
    <property type="entry name" value="PRK01045.1-4"/>
    <property type="match status" value="1"/>
</dbReference>
<dbReference type="PANTHER" id="PTHR30426">
    <property type="entry name" value="4-HYDROXY-3-METHYLBUT-2-ENYL DIPHOSPHATE REDUCTASE"/>
    <property type="match status" value="1"/>
</dbReference>
<dbReference type="PANTHER" id="PTHR30426:SF0">
    <property type="entry name" value="4-HYDROXY-3-METHYLBUT-2-ENYL DIPHOSPHATE REDUCTASE"/>
    <property type="match status" value="1"/>
</dbReference>
<dbReference type="Pfam" id="PF02401">
    <property type="entry name" value="LYTB"/>
    <property type="match status" value="1"/>
</dbReference>
<reference key="1">
    <citation type="journal article" date="2002" name="DNA Res.">
        <title>Complete genomic sequence of nitrogen-fixing symbiotic bacterium Bradyrhizobium japonicum USDA110.</title>
        <authorList>
            <person name="Kaneko T."/>
            <person name="Nakamura Y."/>
            <person name="Sato S."/>
            <person name="Minamisawa K."/>
            <person name="Uchiumi T."/>
            <person name="Sasamoto S."/>
            <person name="Watanabe A."/>
            <person name="Idesawa K."/>
            <person name="Iriguchi M."/>
            <person name="Kawashima K."/>
            <person name="Kohara M."/>
            <person name="Matsumoto M."/>
            <person name="Shimpo S."/>
            <person name="Tsuruoka H."/>
            <person name="Wada T."/>
            <person name="Yamada M."/>
            <person name="Tabata S."/>
        </authorList>
    </citation>
    <scope>NUCLEOTIDE SEQUENCE [LARGE SCALE GENOMIC DNA]</scope>
    <source>
        <strain>JCM 10833 / BCRC 13528 / IAM 13628 / NBRC 14792 / USDA 110</strain>
    </source>
</reference>
<feature type="chain" id="PRO_0000128784" description="4-hydroxy-3-methylbut-2-enyl diphosphate reductase 1">
    <location>
        <begin position="1"/>
        <end position="322"/>
    </location>
</feature>
<feature type="active site" description="Proton donor" evidence="1">
    <location>
        <position position="134"/>
    </location>
</feature>
<feature type="binding site" evidence="1">
    <location>
        <position position="18"/>
    </location>
    <ligand>
        <name>[4Fe-4S] cluster</name>
        <dbReference type="ChEBI" id="CHEBI:49883"/>
    </ligand>
</feature>
<feature type="binding site" evidence="1">
    <location>
        <position position="47"/>
    </location>
    <ligand>
        <name>(2E)-4-hydroxy-3-methylbut-2-enyl diphosphate</name>
        <dbReference type="ChEBI" id="CHEBI:128753"/>
    </ligand>
</feature>
<feature type="binding site" evidence="1">
    <location>
        <position position="47"/>
    </location>
    <ligand>
        <name>dimethylallyl diphosphate</name>
        <dbReference type="ChEBI" id="CHEBI:57623"/>
    </ligand>
</feature>
<feature type="binding site" evidence="1">
    <location>
        <position position="47"/>
    </location>
    <ligand>
        <name>isopentenyl diphosphate</name>
        <dbReference type="ChEBI" id="CHEBI:128769"/>
    </ligand>
</feature>
<feature type="binding site" evidence="1">
    <location>
        <position position="82"/>
    </location>
    <ligand>
        <name>(2E)-4-hydroxy-3-methylbut-2-enyl diphosphate</name>
        <dbReference type="ChEBI" id="CHEBI:128753"/>
    </ligand>
</feature>
<feature type="binding site" evidence="1">
    <location>
        <position position="82"/>
    </location>
    <ligand>
        <name>dimethylallyl diphosphate</name>
        <dbReference type="ChEBI" id="CHEBI:57623"/>
    </ligand>
</feature>
<feature type="binding site" evidence="1">
    <location>
        <position position="82"/>
    </location>
    <ligand>
        <name>isopentenyl diphosphate</name>
        <dbReference type="ChEBI" id="CHEBI:128769"/>
    </ligand>
</feature>
<feature type="binding site" evidence="1">
    <location>
        <position position="104"/>
    </location>
    <ligand>
        <name>[4Fe-4S] cluster</name>
        <dbReference type="ChEBI" id="CHEBI:49883"/>
    </ligand>
</feature>
<feature type="binding site" evidence="1">
    <location>
        <position position="132"/>
    </location>
    <ligand>
        <name>(2E)-4-hydroxy-3-methylbut-2-enyl diphosphate</name>
        <dbReference type="ChEBI" id="CHEBI:128753"/>
    </ligand>
</feature>
<feature type="binding site" evidence="1">
    <location>
        <position position="132"/>
    </location>
    <ligand>
        <name>dimethylallyl diphosphate</name>
        <dbReference type="ChEBI" id="CHEBI:57623"/>
    </ligand>
</feature>
<feature type="binding site" evidence="1">
    <location>
        <position position="132"/>
    </location>
    <ligand>
        <name>isopentenyl diphosphate</name>
        <dbReference type="ChEBI" id="CHEBI:128769"/>
    </ligand>
</feature>
<feature type="binding site" evidence="1">
    <location>
        <position position="173"/>
    </location>
    <ligand>
        <name>(2E)-4-hydroxy-3-methylbut-2-enyl diphosphate</name>
        <dbReference type="ChEBI" id="CHEBI:128753"/>
    </ligand>
</feature>
<feature type="binding site" evidence="1">
    <location>
        <position position="203"/>
    </location>
    <ligand>
        <name>[4Fe-4S] cluster</name>
        <dbReference type="ChEBI" id="CHEBI:49883"/>
    </ligand>
</feature>
<feature type="binding site" evidence="1">
    <location>
        <position position="231"/>
    </location>
    <ligand>
        <name>(2E)-4-hydroxy-3-methylbut-2-enyl diphosphate</name>
        <dbReference type="ChEBI" id="CHEBI:128753"/>
    </ligand>
</feature>
<feature type="binding site" evidence="1">
    <location>
        <position position="231"/>
    </location>
    <ligand>
        <name>dimethylallyl diphosphate</name>
        <dbReference type="ChEBI" id="CHEBI:57623"/>
    </ligand>
</feature>
<feature type="binding site" evidence="1">
    <location>
        <position position="231"/>
    </location>
    <ligand>
        <name>isopentenyl diphosphate</name>
        <dbReference type="ChEBI" id="CHEBI:128769"/>
    </ligand>
</feature>
<feature type="binding site" evidence="1">
    <location>
        <position position="232"/>
    </location>
    <ligand>
        <name>(2E)-4-hydroxy-3-methylbut-2-enyl diphosphate</name>
        <dbReference type="ChEBI" id="CHEBI:128753"/>
    </ligand>
</feature>
<feature type="binding site" evidence="1">
    <location>
        <position position="232"/>
    </location>
    <ligand>
        <name>dimethylallyl diphosphate</name>
        <dbReference type="ChEBI" id="CHEBI:57623"/>
    </ligand>
</feature>
<feature type="binding site" evidence="1">
    <location>
        <position position="232"/>
    </location>
    <ligand>
        <name>isopentenyl diphosphate</name>
        <dbReference type="ChEBI" id="CHEBI:128769"/>
    </ligand>
</feature>
<feature type="binding site" evidence="1">
    <location>
        <position position="233"/>
    </location>
    <ligand>
        <name>(2E)-4-hydroxy-3-methylbut-2-enyl diphosphate</name>
        <dbReference type="ChEBI" id="CHEBI:128753"/>
    </ligand>
</feature>
<feature type="binding site" evidence="1">
    <location>
        <position position="233"/>
    </location>
    <ligand>
        <name>dimethylallyl diphosphate</name>
        <dbReference type="ChEBI" id="CHEBI:57623"/>
    </ligand>
</feature>
<feature type="binding site" evidence="1">
    <location>
        <position position="233"/>
    </location>
    <ligand>
        <name>isopentenyl diphosphate</name>
        <dbReference type="ChEBI" id="CHEBI:128769"/>
    </ligand>
</feature>
<feature type="binding site" evidence="1">
    <location>
        <position position="276"/>
    </location>
    <ligand>
        <name>(2E)-4-hydroxy-3-methylbut-2-enyl diphosphate</name>
        <dbReference type="ChEBI" id="CHEBI:128753"/>
    </ligand>
</feature>
<feature type="binding site" evidence="1">
    <location>
        <position position="276"/>
    </location>
    <ligand>
        <name>dimethylallyl diphosphate</name>
        <dbReference type="ChEBI" id="CHEBI:57623"/>
    </ligand>
</feature>
<feature type="binding site" evidence="1">
    <location>
        <position position="276"/>
    </location>
    <ligand>
        <name>isopentenyl diphosphate</name>
        <dbReference type="ChEBI" id="CHEBI:128769"/>
    </ligand>
</feature>
<proteinExistence type="inferred from homology"/>
<gene>
    <name evidence="1" type="primary">ispH1</name>
    <name type="ordered locus">blr1314</name>
</gene>
<sequence length="322" mass="34976">MSAKPDLKIVLCSPRGFCAGVVRAIDTVERALDKYGAPVYVRHEIVHNKYVVDGLKKKGAIFVEELAEIPESTTAPVVFSAHGVPKSVPADAQSRNLFSLDATCPLVTKVHREAAIHFKRGREIFLIGHSHHPEVVGTLGQLPVGAVTLIETAEDAKTITPKDPNNLAFVTQTTLSIDDTAEIVALLKERFPNINGPHKEDICYATTNRQLAVKKVAPVVDALIVVGAPNSSNSQRLREVAEREGCPIAVLAQRAADLDWKRFENITSLGITAGASAPEVIVEEIMDAFAERFTLHVETVSAAEENEFFPLPRQVRPEAAAE</sequence>
<protein>
    <recommendedName>
        <fullName evidence="1">4-hydroxy-3-methylbut-2-enyl diphosphate reductase 1</fullName>
        <shortName evidence="1">HMBPP reductase 1</shortName>
        <ecNumber evidence="1">1.17.7.4</ecNumber>
    </recommendedName>
</protein>
<comment type="function">
    <text evidence="1">Catalyzes the conversion of 1-hydroxy-2-methyl-2-(E)-butenyl 4-diphosphate (HMBPP) into a mixture of isopentenyl diphosphate (IPP) and dimethylallyl diphosphate (DMAPP). Acts in the terminal step of the DOXP/MEP pathway for isoprenoid precursor biosynthesis.</text>
</comment>
<comment type="catalytic activity">
    <reaction evidence="1">
        <text>isopentenyl diphosphate + 2 oxidized [2Fe-2S]-[ferredoxin] + H2O = (2E)-4-hydroxy-3-methylbut-2-enyl diphosphate + 2 reduced [2Fe-2S]-[ferredoxin] + 2 H(+)</text>
        <dbReference type="Rhea" id="RHEA:24488"/>
        <dbReference type="Rhea" id="RHEA-COMP:10000"/>
        <dbReference type="Rhea" id="RHEA-COMP:10001"/>
        <dbReference type="ChEBI" id="CHEBI:15377"/>
        <dbReference type="ChEBI" id="CHEBI:15378"/>
        <dbReference type="ChEBI" id="CHEBI:33737"/>
        <dbReference type="ChEBI" id="CHEBI:33738"/>
        <dbReference type="ChEBI" id="CHEBI:128753"/>
        <dbReference type="ChEBI" id="CHEBI:128769"/>
        <dbReference type="EC" id="1.17.7.4"/>
    </reaction>
</comment>
<comment type="catalytic activity">
    <reaction evidence="1">
        <text>dimethylallyl diphosphate + 2 oxidized [2Fe-2S]-[ferredoxin] + H2O = (2E)-4-hydroxy-3-methylbut-2-enyl diphosphate + 2 reduced [2Fe-2S]-[ferredoxin] + 2 H(+)</text>
        <dbReference type="Rhea" id="RHEA:24825"/>
        <dbReference type="Rhea" id="RHEA-COMP:10000"/>
        <dbReference type="Rhea" id="RHEA-COMP:10001"/>
        <dbReference type="ChEBI" id="CHEBI:15377"/>
        <dbReference type="ChEBI" id="CHEBI:15378"/>
        <dbReference type="ChEBI" id="CHEBI:33737"/>
        <dbReference type="ChEBI" id="CHEBI:33738"/>
        <dbReference type="ChEBI" id="CHEBI:57623"/>
        <dbReference type="ChEBI" id="CHEBI:128753"/>
        <dbReference type="EC" id="1.17.7.4"/>
    </reaction>
</comment>
<comment type="cofactor">
    <cofactor evidence="1">
        <name>[4Fe-4S] cluster</name>
        <dbReference type="ChEBI" id="CHEBI:49883"/>
    </cofactor>
    <text evidence="1">Binds 1 [4Fe-4S] cluster per subunit.</text>
</comment>
<comment type="pathway">
    <text evidence="1">Isoprenoid biosynthesis; dimethylallyl diphosphate biosynthesis; dimethylallyl diphosphate from (2E)-4-hydroxy-3-methylbutenyl diphosphate: step 1/1.</text>
</comment>
<comment type="pathway">
    <text evidence="1">Isoprenoid biosynthesis; isopentenyl diphosphate biosynthesis via DXP pathway; isopentenyl diphosphate from 1-deoxy-D-xylulose 5-phosphate: step 6/6.</text>
</comment>
<comment type="similarity">
    <text evidence="1">Belongs to the IspH family.</text>
</comment>